<organism>
    <name type="scientific">Salmonella paratyphi C (strain RKS4594)</name>
    <dbReference type="NCBI Taxonomy" id="476213"/>
    <lineage>
        <taxon>Bacteria</taxon>
        <taxon>Pseudomonadati</taxon>
        <taxon>Pseudomonadota</taxon>
        <taxon>Gammaproteobacteria</taxon>
        <taxon>Enterobacterales</taxon>
        <taxon>Enterobacteriaceae</taxon>
        <taxon>Salmonella</taxon>
    </lineage>
</organism>
<sequence>MTHDNKLQVEAIKCGTVIDHIPAQVGFKLLSLFKLTETDQRITIGLNLPSGEMGRKDLIKIENTFLTEEQVNQLALYAPQATVNRIDNYDVVGKSRPSLPERINNVLVCPNSNCISHAEPVSSSFAVKKRANDIALKCKYCEKEFSHYVVLAN</sequence>
<protein>
    <recommendedName>
        <fullName evidence="1">Aspartate carbamoyltransferase regulatory chain</fullName>
    </recommendedName>
</protein>
<gene>
    <name evidence="1" type="primary">pyrI</name>
    <name type="ordered locus">SPC_4591</name>
</gene>
<keyword id="KW-0479">Metal-binding</keyword>
<keyword id="KW-0665">Pyrimidine biosynthesis</keyword>
<keyword id="KW-0862">Zinc</keyword>
<proteinExistence type="inferred from homology"/>
<comment type="function">
    <text evidence="1">Involved in allosteric regulation of aspartate carbamoyltransferase.</text>
</comment>
<comment type="cofactor">
    <cofactor evidence="1">
        <name>Zn(2+)</name>
        <dbReference type="ChEBI" id="CHEBI:29105"/>
    </cofactor>
    <text evidence="1">Binds 1 zinc ion per subunit.</text>
</comment>
<comment type="subunit">
    <text evidence="1">Contains catalytic and regulatory chains.</text>
</comment>
<comment type="similarity">
    <text evidence="1">Belongs to the PyrI family.</text>
</comment>
<dbReference type="EMBL" id="CP000857">
    <property type="protein sequence ID" value="ACN48640.1"/>
    <property type="molecule type" value="Genomic_DNA"/>
</dbReference>
<dbReference type="RefSeq" id="WP_000148570.1">
    <property type="nucleotide sequence ID" value="NC_012125.1"/>
</dbReference>
<dbReference type="SMR" id="C0Q7B7"/>
<dbReference type="KEGG" id="sei:SPC_4591"/>
<dbReference type="HOGENOM" id="CLU_128576_0_0_6"/>
<dbReference type="Proteomes" id="UP000001599">
    <property type="component" value="Chromosome"/>
</dbReference>
<dbReference type="GO" id="GO:0009347">
    <property type="term" value="C:aspartate carbamoyltransferase complex"/>
    <property type="evidence" value="ECO:0007669"/>
    <property type="project" value="InterPro"/>
</dbReference>
<dbReference type="GO" id="GO:0046872">
    <property type="term" value="F:metal ion binding"/>
    <property type="evidence" value="ECO:0007669"/>
    <property type="project" value="UniProtKB-KW"/>
</dbReference>
<dbReference type="GO" id="GO:0006207">
    <property type="term" value="P:'de novo' pyrimidine nucleobase biosynthetic process"/>
    <property type="evidence" value="ECO:0007669"/>
    <property type="project" value="InterPro"/>
</dbReference>
<dbReference type="GO" id="GO:0006221">
    <property type="term" value="P:pyrimidine nucleotide biosynthetic process"/>
    <property type="evidence" value="ECO:0007669"/>
    <property type="project" value="UniProtKB-UniRule"/>
</dbReference>
<dbReference type="FunFam" id="2.30.30.20:FF:000001">
    <property type="entry name" value="Aspartate carbamoyltransferase regulatory chain"/>
    <property type="match status" value="1"/>
</dbReference>
<dbReference type="FunFam" id="3.30.70.140:FF:000001">
    <property type="entry name" value="Aspartate carbamoyltransferase regulatory chain"/>
    <property type="match status" value="1"/>
</dbReference>
<dbReference type="Gene3D" id="2.30.30.20">
    <property type="entry name" value="Aspartate carbamoyltransferase regulatory subunit, C-terminal domain"/>
    <property type="match status" value="1"/>
</dbReference>
<dbReference type="Gene3D" id="3.30.70.140">
    <property type="entry name" value="Aspartate carbamoyltransferase regulatory subunit, N-terminal domain"/>
    <property type="match status" value="1"/>
</dbReference>
<dbReference type="HAMAP" id="MF_00002">
    <property type="entry name" value="Asp_carb_tr_reg"/>
    <property type="match status" value="1"/>
</dbReference>
<dbReference type="InterPro" id="IPR020545">
    <property type="entry name" value="Asp_carbamoyltransf_reg_N"/>
</dbReference>
<dbReference type="InterPro" id="IPR002801">
    <property type="entry name" value="Asp_carbamoylTrfase_reg"/>
</dbReference>
<dbReference type="InterPro" id="IPR020542">
    <property type="entry name" value="Asp_carbamoyltrfase_reg_C"/>
</dbReference>
<dbReference type="InterPro" id="IPR036792">
    <property type="entry name" value="Asp_carbatrfase_reg_C_sf"/>
</dbReference>
<dbReference type="InterPro" id="IPR036793">
    <property type="entry name" value="Asp_carbatrfase_reg_N_sf"/>
</dbReference>
<dbReference type="NCBIfam" id="TIGR00240">
    <property type="entry name" value="ATCase_reg"/>
    <property type="match status" value="1"/>
</dbReference>
<dbReference type="PANTHER" id="PTHR35805">
    <property type="entry name" value="ASPARTATE CARBAMOYLTRANSFERASE REGULATORY CHAIN"/>
    <property type="match status" value="1"/>
</dbReference>
<dbReference type="PANTHER" id="PTHR35805:SF1">
    <property type="entry name" value="ASPARTATE CARBAMOYLTRANSFERASE REGULATORY CHAIN"/>
    <property type="match status" value="1"/>
</dbReference>
<dbReference type="Pfam" id="PF01948">
    <property type="entry name" value="PyrI"/>
    <property type="match status" value="1"/>
</dbReference>
<dbReference type="Pfam" id="PF02748">
    <property type="entry name" value="PyrI_C"/>
    <property type="match status" value="1"/>
</dbReference>
<dbReference type="SUPFAM" id="SSF57825">
    <property type="entry name" value="Aspartate carbamoyltransferase, Regulatory-chain, C-terminal domain"/>
    <property type="match status" value="1"/>
</dbReference>
<dbReference type="SUPFAM" id="SSF54893">
    <property type="entry name" value="Aspartate carbamoyltransferase, Regulatory-chain, N-terminal domain"/>
    <property type="match status" value="1"/>
</dbReference>
<evidence type="ECO:0000255" key="1">
    <source>
        <dbReference type="HAMAP-Rule" id="MF_00002"/>
    </source>
</evidence>
<feature type="chain" id="PRO_1000193115" description="Aspartate carbamoyltransferase regulatory chain">
    <location>
        <begin position="1"/>
        <end position="153"/>
    </location>
</feature>
<feature type="binding site" evidence="1">
    <location>
        <position position="109"/>
    </location>
    <ligand>
        <name>Zn(2+)</name>
        <dbReference type="ChEBI" id="CHEBI:29105"/>
    </ligand>
</feature>
<feature type="binding site" evidence="1">
    <location>
        <position position="114"/>
    </location>
    <ligand>
        <name>Zn(2+)</name>
        <dbReference type="ChEBI" id="CHEBI:29105"/>
    </ligand>
</feature>
<feature type="binding site" evidence="1">
    <location>
        <position position="138"/>
    </location>
    <ligand>
        <name>Zn(2+)</name>
        <dbReference type="ChEBI" id="CHEBI:29105"/>
    </ligand>
</feature>
<feature type="binding site" evidence="1">
    <location>
        <position position="141"/>
    </location>
    <ligand>
        <name>Zn(2+)</name>
        <dbReference type="ChEBI" id="CHEBI:29105"/>
    </ligand>
</feature>
<accession>C0Q7B7</accession>
<name>PYRI_SALPC</name>
<reference key="1">
    <citation type="journal article" date="2009" name="PLoS ONE">
        <title>Salmonella paratyphi C: genetic divergence from Salmonella choleraesuis and pathogenic convergence with Salmonella typhi.</title>
        <authorList>
            <person name="Liu W.-Q."/>
            <person name="Feng Y."/>
            <person name="Wang Y."/>
            <person name="Zou Q.-H."/>
            <person name="Chen F."/>
            <person name="Guo J.-T."/>
            <person name="Peng Y.-H."/>
            <person name="Jin Y."/>
            <person name="Li Y.-G."/>
            <person name="Hu S.-N."/>
            <person name="Johnston R.N."/>
            <person name="Liu G.-R."/>
            <person name="Liu S.-L."/>
        </authorList>
    </citation>
    <scope>NUCLEOTIDE SEQUENCE [LARGE SCALE GENOMIC DNA]</scope>
    <source>
        <strain>RKS4594</strain>
    </source>
</reference>